<sequence length="149" mass="16839">MADQLSEEQISEFKEAFSLFDKDGDGTITTKELGTVMRSLGQNPTEAELQDMINEVDADGNGTIDFPEFLTMMARKMRDTDSEEEIKEAFKVFDKDGNGYISAAELRHVMTNLGEKLTDNEVDEMIREADIDGDGQINYEEFVKMMLSK</sequence>
<accession>P11120</accession>
<proteinExistence type="evidence at protein level"/>
<dbReference type="PIR" id="JK0014">
    <property type="entry name" value="MCMRP"/>
</dbReference>
<dbReference type="SMR" id="P11120"/>
<dbReference type="GO" id="GO:0016460">
    <property type="term" value="C:myosin II complex"/>
    <property type="evidence" value="ECO:0007669"/>
    <property type="project" value="TreeGrafter"/>
</dbReference>
<dbReference type="GO" id="GO:0005509">
    <property type="term" value="F:calcium ion binding"/>
    <property type="evidence" value="ECO:0007669"/>
    <property type="project" value="InterPro"/>
</dbReference>
<dbReference type="CDD" id="cd00051">
    <property type="entry name" value="EFh"/>
    <property type="match status" value="2"/>
</dbReference>
<dbReference type="FunFam" id="1.10.238.10:FF:000034">
    <property type="entry name" value="Calmodulin"/>
    <property type="match status" value="1"/>
</dbReference>
<dbReference type="FunFam" id="1.10.238.10:FF:000006">
    <property type="entry name" value="Calmodulin 1"/>
    <property type="match status" value="1"/>
</dbReference>
<dbReference type="Gene3D" id="1.10.238.10">
    <property type="entry name" value="EF-hand"/>
    <property type="match status" value="3"/>
</dbReference>
<dbReference type="InterPro" id="IPR050230">
    <property type="entry name" value="CALM/Myosin/TropC-like"/>
</dbReference>
<dbReference type="InterPro" id="IPR011992">
    <property type="entry name" value="EF-hand-dom_pair"/>
</dbReference>
<dbReference type="InterPro" id="IPR018247">
    <property type="entry name" value="EF_Hand_1_Ca_BS"/>
</dbReference>
<dbReference type="InterPro" id="IPR002048">
    <property type="entry name" value="EF_hand_dom"/>
</dbReference>
<dbReference type="PANTHER" id="PTHR23048:SF0">
    <property type="entry name" value="CALMODULIN LIKE 3"/>
    <property type="match status" value="1"/>
</dbReference>
<dbReference type="PANTHER" id="PTHR23048">
    <property type="entry name" value="MYOSIN LIGHT CHAIN 1, 3"/>
    <property type="match status" value="1"/>
</dbReference>
<dbReference type="Pfam" id="PF13499">
    <property type="entry name" value="EF-hand_7"/>
    <property type="match status" value="2"/>
</dbReference>
<dbReference type="SMART" id="SM00054">
    <property type="entry name" value="EFh"/>
    <property type="match status" value="4"/>
</dbReference>
<dbReference type="SUPFAM" id="SSF47473">
    <property type="entry name" value="EF-hand"/>
    <property type="match status" value="1"/>
</dbReference>
<dbReference type="PROSITE" id="PS00018">
    <property type="entry name" value="EF_HAND_1"/>
    <property type="match status" value="4"/>
</dbReference>
<dbReference type="PROSITE" id="PS50222">
    <property type="entry name" value="EF_HAND_2"/>
    <property type="match status" value="4"/>
</dbReference>
<evidence type="ECO:0000255" key="1">
    <source>
        <dbReference type="PROSITE-ProRule" id="PRU00448"/>
    </source>
</evidence>
<evidence type="ECO:0000269" key="2">
    <source ref="1"/>
</evidence>
<evidence type="ECO:0000305" key="3"/>
<organism>
    <name type="scientific">Pleurotus cornucopiae</name>
    <name type="common">Cornucopia mushroom</name>
    <dbReference type="NCBI Taxonomy" id="5321"/>
    <lineage>
        <taxon>Eukaryota</taxon>
        <taxon>Fungi</taxon>
        <taxon>Dikarya</taxon>
        <taxon>Basidiomycota</taxon>
        <taxon>Agaricomycotina</taxon>
        <taxon>Agaricomycetes</taxon>
        <taxon>Agaricomycetidae</taxon>
        <taxon>Agaricales</taxon>
        <taxon>Pleurotineae</taxon>
        <taxon>Pleurotaceae</taxon>
        <taxon>Pleurotus</taxon>
    </lineage>
</organism>
<name>CALM_PLECO</name>
<reference key="1">
    <citation type="journal article" date="1987" name="Seikagaku">
        <title>Amino acid sequence of Pleurotus cornucopiae calmodulin.</title>
        <authorList>
            <person name="Toda H."/>
            <person name="Sakiyama F."/>
            <person name="Yokono T."/>
            <person name="Miura K."/>
            <person name="Nakamura T."/>
        </authorList>
    </citation>
    <scope>PROTEIN SEQUENCE OF 2-149</scope>
    <scope>ACETYLATION AT ALA-2</scope>
</reference>
<protein>
    <recommendedName>
        <fullName>Calmodulin</fullName>
        <shortName>CaM</shortName>
    </recommendedName>
</protein>
<comment type="function">
    <text>Calmodulin mediates the control of a large number of enzymes, ion channels and other proteins by Ca(2+). Among the enzymes to be stimulated by the calmodulin-Ca(2+) complex are a number of protein kinases and phosphatases.</text>
</comment>
<comment type="PTM">
    <text>Trimethylation of Lys-116 observed in other calmodulins is absent here.</text>
</comment>
<comment type="miscellaneous">
    <text>This protein has four functional calcium-binding sites.</text>
</comment>
<comment type="similarity">
    <text evidence="3">Belongs to the calmodulin family.</text>
</comment>
<feature type="initiator methionine" description="Removed" evidence="2">
    <location>
        <position position="1"/>
    </location>
</feature>
<feature type="chain" id="PRO_0000198324" description="Calmodulin">
    <location>
        <begin position="2"/>
        <end position="149"/>
    </location>
</feature>
<feature type="domain" description="EF-hand 1" evidence="1">
    <location>
        <begin position="8"/>
        <end position="43"/>
    </location>
</feature>
<feature type="domain" description="EF-hand 2" evidence="1">
    <location>
        <begin position="44"/>
        <end position="79"/>
    </location>
</feature>
<feature type="domain" description="EF-hand 3" evidence="1">
    <location>
        <begin position="81"/>
        <end position="116"/>
    </location>
</feature>
<feature type="domain" description="EF-hand 4" evidence="1">
    <location>
        <begin position="117"/>
        <end position="149"/>
    </location>
</feature>
<feature type="binding site" evidence="1">
    <location>
        <position position="21"/>
    </location>
    <ligand>
        <name>Ca(2+)</name>
        <dbReference type="ChEBI" id="CHEBI:29108"/>
        <label>1</label>
    </ligand>
</feature>
<feature type="binding site" evidence="1">
    <location>
        <position position="23"/>
    </location>
    <ligand>
        <name>Ca(2+)</name>
        <dbReference type="ChEBI" id="CHEBI:29108"/>
        <label>1</label>
    </ligand>
</feature>
<feature type="binding site" evidence="1">
    <location>
        <position position="25"/>
    </location>
    <ligand>
        <name>Ca(2+)</name>
        <dbReference type="ChEBI" id="CHEBI:29108"/>
        <label>1</label>
    </ligand>
</feature>
<feature type="binding site" evidence="1">
    <location>
        <position position="27"/>
    </location>
    <ligand>
        <name>Ca(2+)</name>
        <dbReference type="ChEBI" id="CHEBI:29108"/>
        <label>1</label>
    </ligand>
</feature>
<feature type="binding site" evidence="1">
    <location>
        <position position="32"/>
    </location>
    <ligand>
        <name>Ca(2+)</name>
        <dbReference type="ChEBI" id="CHEBI:29108"/>
        <label>1</label>
    </ligand>
</feature>
<feature type="binding site" evidence="1">
    <location>
        <position position="57"/>
    </location>
    <ligand>
        <name>Ca(2+)</name>
        <dbReference type="ChEBI" id="CHEBI:29108"/>
        <label>2</label>
    </ligand>
</feature>
<feature type="binding site" evidence="1">
    <location>
        <position position="59"/>
    </location>
    <ligand>
        <name>Ca(2+)</name>
        <dbReference type="ChEBI" id="CHEBI:29108"/>
        <label>2</label>
    </ligand>
</feature>
<feature type="binding site" evidence="1">
    <location>
        <position position="61"/>
    </location>
    <ligand>
        <name>Ca(2+)</name>
        <dbReference type="ChEBI" id="CHEBI:29108"/>
        <label>2</label>
    </ligand>
</feature>
<feature type="binding site" evidence="1">
    <location>
        <position position="63"/>
    </location>
    <ligand>
        <name>Ca(2+)</name>
        <dbReference type="ChEBI" id="CHEBI:29108"/>
        <label>2</label>
    </ligand>
</feature>
<feature type="binding site" evidence="1">
    <location>
        <position position="68"/>
    </location>
    <ligand>
        <name>Ca(2+)</name>
        <dbReference type="ChEBI" id="CHEBI:29108"/>
        <label>2</label>
    </ligand>
</feature>
<feature type="binding site" evidence="1">
    <location>
        <position position="94"/>
    </location>
    <ligand>
        <name>Ca(2+)</name>
        <dbReference type="ChEBI" id="CHEBI:29108"/>
        <label>3</label>
    </ligand>
</feature>
<feature type="binding site" evidence="1">
    <location>
        <position position="96"/>
    </location>
    <ligand>
        <name>Ca(2+)</name>
        <dbReference type="ChEBI" id="CHEBI:29108"/>
        <label>3</label>
    </ligand>
</feature>
<feature type="binding site" evidence="1">
    <location>
        <position position="98"/>
    </location>
    <ligand>
        <name>Ca(2+)</name>
        <dbReference type="ChEBI" id="CHEBI:29108"/>
        <label>3</label>
    </ligand>
</feature>
<feature type="binding site" evidence="1">
    <location>
        <position position="100"/>
    </location>
    <ligand>
        <name>Ca(2+)</name>
        <dbReference type="ChEBI" id="CHEBI:29108"/>
        <label>3</label>
    </ligand>
</feature>
<feature type="binding site" evidence="1">
    <location>
        <position position="105"/>
    </location>
    <ligand>
        <name>Ca(2+)</name>
        <dbReference type="ChEBI" id="CHEBI:29108"/>
        <label>3</label>
    </ligand>
</feature>
<feature type="binding site" evidence="1">
    <location>
        <position position="130"/>
    </location>
    <ligand>
        <name>Ca(2+)</name>
        <dbReference type="ChEBI" id="CHEBI:29108"/>
        <label>4</label>
    </ligand>
</feature>
<feature type="binding site" evidence="1">
    <location>
        <position position="132"/>
    </location>
    <ligand>
        <name>Ca(2+)</name>
        <dbReference type="ChEBI" id="CHEBI:29108"/>
        <label>4</label>
    </ligand>
</feature>
<feature type="binding site" evidence="1">
    <location>
        <position position="134"/>
    </location>
    <ligand>
        <name>Ca(2+)</name>
        <dbReference type="ChEBI" id="CHEBI:29108"/>
        <label>4</label>
    </ligand>
</feature>
<feature type="binding site" evidence="1">
    <location>
        <position position="136"/>
    </location>
    <ligand>
        <name>Ca(2+)</name>
        <dbReference type="ChEBI" id="CHEBI:29108"/>
        <label>4</label>
    </ligand>
</feature>
<feature type="binding site" evidence="1">
    <location>
        <position position="141"/>
    </location>
    <ligand>
        <name>Ca(2+)</name>
        <dbReference type="ChEBI" id="CHEBI:29108"/>
        <label>4</label>
    </ligand>
</feature>
<feature type="modified residue" description="N-acetylalanine" evidence="2">
    <location>
        <position position="2"/>
    </location>
</feature>
<keyword id="KW-0007">Acetylation</keyword>
<keyword id="KW-0106">Calcium</keyword>
<keyword id="KW-0903">Direct protein sequencing</keyword>
<keyword id="KW-0479">Metal-binding</keyword>
<keyword id="KW-0677">Repeat</keyword>
<gene>
    <name type="primary">CMD1</name>
</gene>